<sequence>MAKEIFFSDEARNKLYEGVKKLNDAVKVTMGPRGRNVLIQKSFGAPTITKDGVSVAKEVELKDSLENMGASLVREVASKTADQAGDGTTTATVLAHAIFKEGLRNITAGANPIEVKRGMDKACEAIVAELKKLSREVKDKKEIAQVATISANSDEKIGNLIADAMEKVGKDGVITVEEAKSINDELNVVEGMQFDRGYLSPYFITNTEKMTAELQNPFILLFDKKIANLKDLLPILEQIQKTGKPLLIIAEDIEGEALATLVVNKLRGVLNISAVKAPGFGDRRKAMLEDIAILTGGEVISEELGRTLESASIQDLGQASSVIIDKDNTTIVNGAGEKANINARINQIKAQIAETSSDYDREKLQERLAKLSGGVAVIKVGAATETEMKEKKDRVDDALSATKAAVEEGIVIGGGAALIKAKSKISLNLQGDEAIGAAIVERALRAPLRQIAENAGFDAGVVVNTVENSKEENTGFDAAKGEYVNMLESGIIDPVKVERVALLNAVSVASMLLTTEATISEIKEDKPAMPDMSGMGGMGGMGGMM</sequence>
<proteinExistence type="inferred from homology"/>
<feature type="chain" id="PRO_1000147023" description="Chaperonin GroEL">
    <location>
        <begin position="1"/>
        <end position="545"/>
    </location>
</feature>
<feature type="binding site" evidence="1">
    <location>
        <begin position="29"/>
        <end position="32"/>
    </location>
    <ligand>
        <name>ATP</name>
        <dbReference type="ChEBI" id="CHEBI:30616"/>
    </ligand>
</feature>
<feature type="binding site" evidence="1">
    <location>
        <position position="50"/>
    </location>
    <ligand>
        <name>ATP</name>
        <dbReference type="ChEBI" id="CHEBI:30616"/>
    </ligand>
</feature>
<feature type="binding site" evidence="1">
    <location>
        <begin position="86"/>
        <end position="90"/>
    </location>
    <ligand>
        <name>ATP</name>
        <dbReference type="ChEBI" id="CHEBI:30616"/>
    </ligand>
</feature>
<feature type="binding site" evidence="1">
    <location>
        <position position="414"/>
    </location>
    <ligand>
        <name>ATP</name>
        <dbReference type="ChEBI" id="CHEBI:30616"/>
    </ligand>
</feature>
<feature type="binding site" evidence="1">
    <location>
        <begin position="477"/>
        <end position="479"/>
    </location>
    <ligand>
        <name>ATP</name>
        <dbReference type="ChEBI" id="CHEBI:30616"/>
    </ligand>
</feature>
<feature type="binding site" evidence="1">
    <location>
        <position position="493"/>
    </location>
    <ligand>
        <name>ATP</name>
        <dbReference type="ChEBI" id="CHEBI:30616"/>
    </ligand>
</feature>
<reference key="1">
    <citation type="journal article" date="2008" name="Foodborne Pathog. Dis.">
        <title>The complete genome sequence and analysis of the human pathogen Campylobacter lari.</title>
        <authorList>
            <person name="Miller W.G."/>
            <person name="Wang G."/>
            <person name="Binnewies T.T."/>
            <person name="Parker C.T."/>
        </authorList>
    </citation>
    <scope>NUCLEOTIDE SEQUENCE [LARGE SCALE GENOMIC DNA]</scope>
    <source>
        <strain>RM2100 / D67 / ATCC BAA-1060</strain>
    </source>
</reference>
<keyword id="KW-0067">ATP-binding</keyword>
<keyword id="KW-0143">Chaperone</keyword>
<keyword id="KW-0963">Cytoplasm</keyword>
<keyword id="KW-0413">Isomerase</keyword>
<keyword id="KW-0547">Nucleotide-binding</keyword>
<keyword id="KW-1185">Reference proteome</keyword>
<organism>
    <name type="scientific">Campylobacter lari (strain RM2100 / D67 / ATCC BAA-1060)</name>
    <dbReference type="NCBI Taxonomy" id="306263"/>
    <lineage>
        <taxon>Bacteria</taxon>
        <taxon>Pseudomonadati</taxon>
        <taxon>Campylobacterota</taxon>
        <taxon>Epsilonproteobacteria</taxon>
        <taxon>Campylobacterales</taxon>
        <taxon>Campylobacteraceae</taxon>
        <taxon>Campylobacter</taxon>
    </lineage>
</organism>
<evidence type="ECO:0000255" key="1">
    <source>
        <dbReference type="HAMAP-Rule" id="MF_00600"/>
    </source>
</evidence>
<accession>B9KCR7</accession>
<name>CH60_CAMLR</name>
<gene>
    <name evidence="1" type="primary">groEL</name>
    <name evidence="1" type="synonym">groL</name>
    <name type="ordered locus">Cla_1034</name>
</gene>
<protein>
    <recommendedName>
        <fullName evidence="1">Chaperonin GroEL</fullName>
        <ecNumber evidence="1">5.6.1.7</ecNumber>
    </recommendedName>
    <alternativeName>
        <fullName evidence="1">60 kDa chaperonin</fullName>
    </alternativeName>
    <alternativeName>
        <fullName evidence="1">Chaperonin-60</fullName>
        <shortName evidence="1">Cpn60</shortName>
    </alternativeName>
</protein>
<dbReference type="EC" id="5.6.1.7" evidence="1"/>
<dbReference type="EMBL" id="CP000932">
    <property type="protein sequence ID" value="ACM64356.1"/>
    <property type="molecule type" value="Genomic_DNA"/>
</dbReference>
<dbReference type="RefSeq" id="WP_012661739.1">
    <property type="nucleotide sequence ID" value="NC_012039.1"/>
</dbReference>
<dbReference type="SMR" id="B9KCR7"/>
<dbReference type="STRING" id="306263.Cla_1034"/>
<dbReference type="KEGG" id="cla:CLA_1034"/>
<dbReference type="PATRIC" id="fig|306263.5.peg.1018"/>
<dbReference type="eggNOG" id="COG0459">
    <property type="taxonomic scope" value="Bacteria"/>
</dbReference>
<dbReference type="HOGENOM" id="CLU_016503_3_0_7"/>
<dbReference type="Proteomes" id="UP000007727">
    <property type="component" value="Chromosome"/>
</dbReference>
<dbReference type="GO" id="GO:0005737">
    <property type="term" value="C:cytoplasm"/>
    <property type="evidence" value="ECO:0007669"/>
    <property type="project" value="UniProtKB-SubCell"/>
</dbReference>
<dbReference type="GO" id="GO:0005524">
    <property type="term" value="F:ATP binding"/>
    <property type="evidence" value="ECO:0007669"/>
    <property type="project" value="UniProtKB-UniRule"/>
</dbReference>
<dbReference type="GO" id="GO:0140662">
    <property type="term" value="F:ATP-dependent protein folding chaperone"/>
    <property type="evidence" value="ECO:0007669"/>
    <property type="project" value="InterPro"/>
</dbReference>
<dbReference type="GO" id="GO:0016853">
    <property type="term" value="F:isomerase activity"/>
    <property type="evidence" value="ECO:0007669"/>
    <property type="project" value="UniProtKB-KW"/>
</dbReference>
<dbReference type="GO" id="GO:0051082">
    <property type="term" value="F:unfolded protein binding"/>
    <property type="evidence" value="ECO:0007669"/>
    <property type="project" value="UniProtKB-UniRule"/>
</dbReference>
<dbReference type="GO" id="GO:0042026">
    <property type="term" value="P:protein refolding"/>
    <property type="evidence" value="ECO:0007669"/>
    <property type="project" value="UniProtKB-UniRule"/>
</dbReference>
<dbReference type="CDD" id="cd03344">
    <property type="entry name" value="GroEL"/>
    <property type="match status" value="1"/>
</dbReference>
<dbReference type="FunFam" id="3.50.7.10:FF:000001">
    <property type="entry name" value="60 kDa chaperonin"/>
    <property type="match status" value="1"/>
</dbReference>
<dbReference type="Gene3D" id="3.50.7.10">
    <property type="entry name" value="GroEL"/>
    <property type="match status" value="1"/>
</dbReference>
<dbReference type="Gene3D" id="1.10.560.10">
    <property type="entry name" value="GroEL-like equatorial domain"/>
    <property type="match status" value="1"/>
</dbReference>
<dbReference type="Gene3D" id="3.30.260.10">
    <property type="entry name" value="TCP-1-like chaperonin intermediate domain"/>
    <property type="match status" value="1"/>
</dbReference>
<dbReference type="HAMAP" id="MF_00600">
    <property type="entry name" value="CH60"/>
    <property type="match status" value="1"/>
</dbReference>
<dbReference type="InterPro" id="IPR018370">
    <property type="entry name" value="Chaperonin_Cpn60_CS"/>
</dbReference>
<dbReference type="InterPro" id="IPR001844">
    <property type="entry name" value="Cpn60/GroEL"/>
</dbReference>
<dbReference type="InterPro" id="IPR002423">
    <property type="entry name" value="Cpn60/GroEL/TCP-1"/>
</dbReference>
<dbReference type="InterPro" id="IPR027409">
    <property type="entry name" value="GroEL-like_apical_dom_sf"/>
</dbReference>
<dbReference type="InterPro" id="IPR027413">
    <property type="entry name" value="GROEL-like_equatorial_sf"/>
</dbReference>
<dbReference type="InterPro" id="IPR027410">
    <property type="entry name" value="TCP-1-like_intermed_sf"/>
</dbReference>
<dbReference type="NCBIfam" id="TIGR02348">
    <property type="entry name" value="GroEL"/>
    <property type="match status" value="1"/>
</dbReference>
<dbReference type="NCBIfam" id="NF000592">
    <property type="entry name" value="PRK00013.1"/>
    <property type="match status" value="1"/>
</dbReference>
<dbReference type="NCBIfam" id="NF009487">
    <property type="entry name" value="PRK12849.1"/>
    <property type="match status" value="1"/>
</dbReference>
<dbReference type="NCBIfam" id="NF009488">
    <property type="entry name" value="PRK12850.1"/>
    <property type="match status" value="1"/>
</dbReference>
<dbReference type="NCBIfam" id="NF009489">
    <property type="entry name" value="PRK12851.1"/>
    <property type="match status" value="1"/>
</dbReference>
<dbReference type="PANTHER" id="PTHR45633">
    <property type="entry name" value="60 KDA HEAT SHOCK PROTEIN, MITOCHONDRIAL"/>
    <property type="match status" value="1"/>
</dbReference>
<dbReference type="Pfam" id="PF00118">
    <property type="entry name" value="Cpn60_TCP1"/>
    <property type="match status" value="1"/>
</dbReference>
<dbReference type="PRINTS" id="PR00298">
    <property type="entry name" value="CHAPERONIN60"/>
</dbReference>
<dbReference type="SUPFAM" id="SSF52029">
    <property type="entry name" value="GroEL apical domain-like"/>
    <property type="match status" value="1"/>
</dbReference>
<dbReference type="SUPFAM" id="SSF48592">
    <property type="entry name" value="GroEL equatorial domain-like"/>
    <property type="match status" value="1"/>
</dbReference>
<dbReference type="SUPFAM" id="SSF54849">
    <property type="entry name" value="GroEL-intermediate domain like"/>
    <property type="match status" value="1"/>
</dbReference>
<dbReference type="PROSITE" id="PS00296">
    <property type="entry name" value="CHAPERONINS_CPN60"/>
    <property type="match status" value="1"/>
</dbReference>
<comment type="function">
    <text evidence="1">Together with its co-chaperonin GroES, plays an essential role in assisting protein folding. The GroEL-GroES system forms a nano-cage that allows encapsulation of the non-native substrate proteins and provides a physical environment optimized to promote and accelerate protein folding.</text>
</comment>
<comment type="catalytic activity">
    <reaction evidence="1">
        <text>ATP + H2O + a folded polypeptide = ADP + phosphate + an unfolded polypeptide.</text>
        <dbReference type="EC" id="5.6.1.7"/>
    </reaction>
</comment>
<comment type="subunit">
    <text evidence="1">Forms a cylinder of 14 subunits composed of two heptameric rings stacked back-to-back. Interacts with the co-chaperonin GroES.</text>
</comment>
<comment type="subcellular location">
    <subcellularLocation>
        <location evidence="1">Cytoplasm</location>
    </subcellularLocation>
</comment>
<comment type="similarity">
    <text evidence="1">Belongs to the chaperonin (HSP60) family.</text>
</comment>